<reference key="1">
    <citation type="journal article" date="2006" name="J. Bacteriol.">
        <title>Comparative genomic evidence for a close relationship between the dimorphic prosthecate bacteria Hyphomonas neptunium and Caulobacter crescentus.</title>
        <authorList>
            <person name="Badger J.H."/>
            <person name="Hoover T.R."/>
            <person name="Brun Y.V."/>
            <person name="Weiner R.M."/>
            <person name="Laub M.T."/>
            <person name="Alexandre G."/>
            <person name="Mrazek J."/>
            <person name="Ren Q."/>
            <person name="Paulsen I.T."/>
            <person name="Nelson K.E."/>
            <person name="Khouri H.M."/>
            <person name="Radune D."/>
            <person name="Sosa J."/>
            <person name="Dodson R.J."/>
            <person name="Sullivan S.A."/>
            <person name="Rosovitz M.J."/>
            <person name="Madupu R."/>
            <person name="Brinkac L.M."/>
            <person name="Durkin A.S."/>
            <person name="Daugherty S.C."/>
            <person name="Kothari S.P."/>
            <person name="Giglio M.G."/>
            <person name="Zhou L."/>
            <person name="Haft D.H."/>
            <person name="Selengut J.D."/>
            <person name="Davidsen T.M."/>
            <person name="Yang Q."/>
            <person name="Zafar N."/>
            <person name="Ward N.L."/>
        </authorList>
    </citation>
    <scope>NUCLEOTIDE SEQUENCE [LARGE SCALE GENOMIC DNA]</scope>
    <source>
        <strain>ATCC 15444</strain>
    </source>
</reference>
<organism>
    <name type="scientific">Hyphomonas neptunium (strain ATCC 15444)</name>
    <dbReference type="NCBI Taxonomy" id="228405"/>
    <lineage>
        <taxon>Bacteria</taxon>
        <taxon>Pseudomonadati</taxon>
        <taxon>Pseudomonadota</taxon>
        <taxon>Alphaproteobacteria</taxon>
        <taxon>Hyphomonadales</taxon>
        <taxon>Hyphomonadaceae</taxon>
        <taxon>Hyphomonas</taxon>
    </lineage>
</organism>
<name>MNMG_HYPNA</name>
<dbReference type="EMBL" id="CP000158">
    <property type="protein sequence ID" value="ABI76060.1"/>
    <property type="molecule type" value="Genomic_DNA"/>
</dbReference>
<dbReference type="RefSeq" id="WP_011648528.1">
    <property type="nucleotide sequence ID" value="NC_008358.1"/>
</dbReference>
<dbReference type="SMR" id="Q0BWA9"/>
<dbReference type="STRING" id="228405.HNE_3563"/>
<dbReference type="KEGG" id="hne:HNE_3563"/>
<dbReference type="eggNOG" id="COG0445">
    <property type="taxonomic scope" value="Bacteria"/>
</dbReference>
<dbReference type="HOGENOM" id="CLU_007831_2_2_5"/>
<dbReference type="Proteomes" id="UP000001959">
    <property type="component" value="Chromosome"/>
</dbReference>
<dbReference type="GO" id="GO:0005829">
    <property type="term" value="C:cytosol"/>
    <property type="evidence" value="ECO:0007669"/>
    <property type="project" value="TreeGrafter"/>
</dbReference>
<dbReference type="GO" id="GO:0050660">
    <property type="term" value="F:flavin adenine dinucleotide binding"/>
    <property type="evidence" value="ECO:0007669"/>
    <property type="project" value="UniProtKB-UniRule"/>
</dbReference>
<dbReference type="GO" id="GO:0030488">
    <property type="term" value="P:tRNA methylation"/>
    <property type="evidence" value="ECO:0007669"/>
    <property type="project" value="TreeGrafter"/>
</dbReference>
<dbReference type="GO" id="GO:0002098">
    <property type="term" value="P:tRNA wobble uridine modification"/>
    <property type="evidence" value="ECO:0007669"/>
    <property type="project" value="InterPro"/>
</dbReference>
<dbReference type="FunFam" id="3.50.50.60:FF:000145">
    <property type="entry name" value="tRNA uridine 5-carboxymethylaminomethyl modification enzyme"/>
    <property type="match status" value="1"/>
</dbReference>
<dbReference type="FunFam" id="1.10.150.570:FF:000001">
    <property type="entry name" value="tRNA uridine 5-carboxymethylaminomethyl modification enzyme MnmG"/>
    <property type="match status" value="1"/>
</dbReference>
<dbReference type="FunFam" id="3.50.50.60:FF:000002">
    <property type="entry name" value="tRNA uridine 5-carboxymethylaminomethyl modification enzyme MnmG"/>
    <property type="match status" value="1"/>
</dbReference>
<dbReference type="Gene3D" id="3.50.50.60">
    <property type="entry name" value="FAD/NAD(P)-binding domain"/>
    <property type="match status" value="2"/>
</dbReference>
<dbReference type="Gene3D" id="1.10.150.570">
    <property type="entry name" value="GidA associated domain, C-terminal subdomain"/>
    <property type="match status" value="1"/>
</dbReference>
<dbReference type="HAMAP" id="MF_00129">
    <property type="entry name" value="MnmG_GidA"/>
    <property type="match status" value="1"/>
</dbReference>
<dbReference type="InterPro" id="IPR036188">
    <property type="entry name" value="FAD/NAD-bd_sf"/>
</dbReference>
<dbReference type="InterPro" id="IPR049312">
    <property type="entry name" value="GIDA_C_N"/>
</dbReference>
<dbReference type="InterPro" id="IPR004416">
    <property type="entry name" value="MnmG"/>
</dbReference>
<dbReference type="InterPro" id="IPR002218">
    <property type="entry name" value="MnmG-rel"/>
</dbReference>
<dbReference type="InterPro" id="IPR020595">
    <property type="entry name" value="MnmG-rel_CS"/>
</dbReference>
<dbReference type="InterPro" id="IPR026904">
    <property type="entry name" value="MnmG_C"/>
</dbReference>
<dbReference type="InterPro" id="IPR047001">
    <property type="entry name" value="MnmG_C_subdom"/>
</dbReference>
<dbReference type="InterPro" id="IPR044920">
    <property type="entry name" value="MnmG_C_subdom_sf"/>
</dbReference>
<dbReference type="InterPro" id="IPR040131">
    <property type="entry name" value="MnmG_N"/>
</dbReference>
<dbReference type="NCBIfam" id="TIGR00136">
    <property type="entry name" value="mnmG_gidA"/>
    <property type="match status" value="1"/>
</dbReference>
<dbReference type="PANTHER" id="PTHR11806">
    <property type="entry name" value="GLUCOSE INHIBITED DIVISION PROTEIN A"/>
    <property type="match status" value="1"/>
</dbReference>
<dbReference type="PANTHER" id="PTHR11806:SF0">
    <property type="entry name" value="PROTEIN MTO1 HOMOLOG, MITOCHONDRIAL"/>
    <property type="match status" value="1"/>
</dbReference>
<dbReference type="Pfam" id="PF01134">
    <property type="entry name" value="GIDA"/>
    <property type="match status" value="1"/>
</dbReference>
<dbReference type="Pfam" id="PF21680">
    <property type="entry name" value="GIDA_C_1st"/>
    <property type="match status" value="1"/>
</dbReference>
<dbReference type="Pfam" id="PF13932">
    <property type="entry name" value="SAM_GIDA_C"/>
    <property type="match status" value="1"/>
</dbReference>
<dbReference type="PRINTS" id="PR00411">
    <property type="entry name" value="PNDRDTASEI"/>
</dbReference>
<dbReference type="SMART" id="SM01228">
    <property type="entry name" value="GIDA_assoc_3"/>
    <property type="match status" value="1"/>
</dbReference>
<dbReference type="SUPFAM" id="SSF51905">
    <property type="entry name" value="FAD/NAD(P)-binding domain"/>
    <property type="match status" value="1"/>
</dbReference>
<dbReference type="PROSITE" id="PS01280">
    <property type="entry name" value="GIDA_1"/>
    <property type="match status" value="1"/>
</dbReference>
<dbReference type="PROSITE" id="PS01281">
    <property type="entry name" value="GIDA_2"/>
    <property type="match status" value="1"/>
</dbReference>
<gene>
    <name evidence="1" type="primary">mnmG</name>
    <name evidence="1" type="synonym">gidA</name>
    <name type="ordered locus">HNE_3563</name>
</gene>
<sequence>MPDFPDFDVIVIGGGHAGCEAAAASARFGARTALITHKRSTIGEMSCNPAIGGLGKGHLVREIDALDGVMGRLADKAGIQFRMLNRSKGPAVWGPRSQIDRKLYREAMQSELADYPNLTIIEDGAEDLIVEDGLIRGVVGLTGQRYGASKVVITTGTFLKGEIHIGAKRIPAGRIGEAPALGLSDRLYSIGLPMGRLKTGTPARLDGRTIHWDRLEMQPADEQPIPFSFLNSEITVRQVQCGITWTTPETHAIIEAHMNESAVYSGAISGRGPRYCPSIEDKVNRFGDRDRHQVFLEPEGLDDHTVYPNGISTSLPEEVQEKFIRTIPGLEDAVILQHAYAIEYDYVDPRALSPALEVKLMPGLYLAGQINGTTGYEEAGAQGLMAGLNAARAASGKDPVIFDRAEAYIGVLIDDLVTRGVTEPYRMFTSRAEYRLALRADNADQRLTQRGIDAGVVCETRAAMFHVKHRALESARNLLKTLNLSPAAAVRNGWAVNQDGRIRSAWEYLSYKEICFDHLAQVWPELSAIPAEIVAQIEIEALYSAYLDRQAEDVAALRRDEALSIPSDLDYDLIGGLSNEVRQKLKSVRPGTLGQAGRIEGVTPGALTALLGHVRRVRKAG</sequence>
<keyword id="KW-0963">Cytoplasm</keyword>
<keyword id="KW-0274">FAD</keyword>
<keyword id="KW-0285">Flavoprotein</keyword>
<keyword id="KW-0520">NAD</keyword>
<keyword id="KW-1185">Reference proteome</keyword>
<keyword id="KW-0819">tRNA processing</keyword>
<protein>
    <recommendedName>
        <fullName evidence="1">tRNA uridine 5-carboxymethylaminomethyl modification enzyme MnmG</fullName>
    </recommendedName>
    <alternativeName>
        <fullName evidence="1">Glucose-inhibited division protein A</fullName>
    </alternativeName>
</protein>
<evidence type="ECO:0000255" key="1">
    <source>
        <dbReference type="HAMAP-Rule" id="MF_00129"/>
    </source>
</evidence>
<accession>Q0BWA9</accession>
<comment type="function">
    <text evidence="1">NAD-binding protein involved in the addition of a carboxymethylaminomethyl (cmnm) group at the wobble position (U34) of certain tRNAs, forming tRNA-cmnm(5)s(2)U34.</text>
</comment>
<comment type="cofactor">
    <cofactor evidence="1">
        <name>FAD</name>
        <dbReference type="ChEBI" id="CHEBI:57692"/>
    </cofactor>
</comment>
<comment type="subunit">
    <text evidence="1">Homodimer. Heterotetramer of two MnmE and two MnmG subunits.</text>
</comment>
<comment type="subcellular location">
    <subcellularLocation>
        <location evidence="1">Cytoplasm</location>
    </subcellularLocation>
</comment>
<comment type="similarity">
    <text evidence="1">Belongs to the MnmG family.</text>
</comment>
<feature type="chain" id="PRO_0000345281" description="tRNA uridine 5-carboxymethylaminomethyl modification enzyme MnmG">
    <location>
        <begin position="1"/>
        <end position="621"/>
    </location>
</feature>
<feature type="binding site" evidence="1">
    <location>
        <begin position="13"/>
        <end position="18"/>
    </location>
    <ligand>
        <name>FAD</name>
        <dbReference type="ChEBI" id="CHEBI:57692"/>
    </ligand>
</feature>
<feature type="binding site" evidence="1">
    <location>
        <begin position="272"/>
        <end position="286"/>
    </location>
    <ligand>
        <name>NAD(+)</name>
        <dbReference type="ChEBI" id="CHEBI:57540"/>
    </ligand>
</feature>
<proteinExistence type="inferred from homology"/>